<sequence length="702" mass="79546">MPFRGGGQKGRGRGSVKRKGPGFTAARVDEVEYAEGLDDDVLSDSDESDQQSGQPYNELLQLLQAKTDSKGPARKKRKTSHQNKEGTEEAENVAEMTAVEEGEETLDAELQQQEPDEEGDLEDGDVDAQEDSDDEESGNEPFESHFSSPDESELSQKIKAASENKWKNAKKELPGGLKIWRAIPDCGQDDVPLLAAMKSMSSVKVKRKLKSAVTERIPSLSGNVQQVSPYIFDYQDVLYGARTTSESADMRDMLAVHATNHVLKTRDRVLKNNARVAKEQDGDLELRDQGFTRPKVLYLLPTRQACVRVVESITRFFQPEQQENKKRFIDAFSASDDPSWEDKPQDFRELFGGNDDDMFRIGLKFTRKTLKFFTQFYTSDLILASPLGLRTIMDQADVKKRDHDFLSSVEVVIVDHTDALLMQNWDHVSYILKHLNLQPKEAHGCDFSRVRTWYLDNNARYVRQLILLSSFITPEINSVFSTHMHNVFGKVKLNPIYNGAIAELPLPVPVKQTFTRFDCLSPTKDPDARFKHFTTTILSTLVRNITTSRNRASAGGTLIFIPSYLDFVRLRNYFATSQQTTNVSFGAISEYTEPREISRARSYFMTGRQSVLLYTERLHHFRRFRIRGVKRIIMYGMPDNPIFWGEIVGFLGLDPAGVVEAAEGGVRALFSKYDALKLERIVGTKRVGNMLREKGGDTFTFM</sequence>
<dbReference type="EMBL" id="AACD01000018">
    <property type="protein sequence ID" value="EAA65537.1"/>
    <property type="status" value="ALT_SEQ"/>
    <property type="molecule type" value="Genomic_DNA"/>
</dbReference>
<dbReference type="EMBL" id="BN001308">
    <property type="protein sequence ID" value="CBF87659.1"/>
    <property type="molecule type" value="Genomic_DNA"/>
</dbReference>
<dbReference type="RefSeq" id="XP_658958.1">
    <property type="nucleotide sequence ID" value="XM_653866.1"/>
</dbReference>
<dbReference type="FunCoup" id="Q5BDM6">
    <property type="interactions" value="1197"/>
</dbReference>
<dbReference type="STRING" id="227321.Q5BDM6"/>
<dbReference type="EnsemblFungi" id="CBF87659">
    <property type="protein sequence ID" value="CBF87659"/>
    <property type="gene ID" value="ANIA_01354"/>
</dbReference>
<dbReference type="VEuPathDB" id="FungiDB:AN1354"/>
<dbReference type="eggNOG" id="KOG2340">
    <property type="taxonomic scope" value="Eukaryota"/>
</dbReference>
<dbReference type="HOGENOM" id="CLU_018705_0_1_1"/>
<dbReference type="InParanoid" id="Q5BDM6"/>
<dbReference type="OMA" id="QDRGDTF"/>
<dbReference type="OrthoDB" id="10264378at2759"/>
<dbReference type="Proteomes" id="UP000000560">
    <property type="component" value="Chromosome VIII"/>
</dbReference>
<dbReference type="GO" id="GO:0005730">
    <property type="term" value="C:nucleolus"/>
    <property type="evidence" value="ECO:0000318"/>
    <property type="project" value="GO_Central"/>
</dbReference>
<dbReference type="GO" id="GO:0032040">
    <property type="term" value="C:small-subunit processome"/>
    <property type="evidence" value="ECO:0000318"/>
    <property type="project" value="GO_Central"/>
</dbReference>
<dbReference type="GO" id="GO:0019843">
    <property type="term" value="F:rRNA binding"/>
    <property type="evidence" value="ECO:0000318"/>
    <property type="project" value="GO_Central"/>
</dbReference>
<dbReference type="GO" id="GO:0034511">
    <property type="term" value="F:U3 snoRNA binding"/>
    <property type="evidence" value="ECO:0000318"/>
    <property type="project" value="GO_Central"/>
</dbReference>
<dbReference type="GO" id="GO:0000462">
    <property type="term" value="P:maturation of SSU-rRNA from tricistronic rRNA transcript (SSU-rRNA, 5.8S rRNA, LSU-rRNA)"/>
    <property type="evidence" value="ECO:0000318"/>
    <property type="project" value="GO_Central"/>
</dbReference>
<dbReference type="FunFam" id="3.40.50.300:FF:002356">
    <property type="entry name" value="U3 small nucleolar RNA-associated protein 25"/>
    <property type="match status" value="1"/>
</dbReference>
<dbReference type="Gene3D" id="3.40.50.300">
    <property type="entry name" value="P-loop containing nucleotide triphosphate hydrolases"/>
    <property type="match status" value="1"/>
</dbReference>
<dbReference type="InterPro" id="IPR027417">
    <property type="entry name" value="P-loop_NTPase"/>
</dbReference>
<dbReference type="InterPro" id="IPR010678">
    <property type="entry name" value="UTP25"/>
</dbReference>
<dbReference type="InterPro" id="IPR053939">
    <property type="entry name" value="UTP25_C"/>
</dbReference>
<dbReference type="InterPro" id="IPR053940">
    <property type="entry name" value="UTP25_NTPase-like"/>
</dbReference>
<dbReference type="PANTHER" id="PTHR12933">
    <property type="entry name" value="ORF PROTEIN-RELATED"/>
    <property type="match status" value="1"/>
</dbReference>
<dbReference type="PANTHER" id="PTHR12933:SF0">
    <property type="entry name" value="U3 SMALL NUCLEOLAR RNA-ASSOCIATED PROTEIN 25 HOMOLOG"/>
    <property type="match status" value="1"/>
</dbReference>
<dbReference type="Pfam" id="PF06862">
    <property type="entry name" value="Utp25_C"/>
    <property type="match status" value="1"/>
</dbReference>
<dbReference type="Pfam" id="PF22916">
    <property type="entry name" value="UTP25_NTPase-like"/>
    <property type="match status" value="1"/>
</dbReference>
<gene>
    <name type="primary">utp25</name>
    <name type="ORF">AN1354.2</name>
</gene>
<keyword id="KW-0539">Nucleus</keyword>
<keyword id="KW-1185">Reference proteome</keyword>
<keyword id="KW-0687">Ribonucleoprotein</keyword>
<keyword id="KW-0690">Ribosome biogenesis</keyword>
<keyword id="KW-0698">rRNA processing</keyword>
<feature type="chain" id="PRO_0000408117" description="U3 small nucleolar RNA-associated protein 25">
    <location>
        <begin position="1"/>
        <end position="702"/>
    </location>
</feature>
<feature type="region of interest" description="Disordered" evidence="2">
    <location>
        <begin position="1"/>
        <end position="157"/>
    </location>
</feature>
<feature type="compositionally biased region" description="Basic residues" evidence="2">
    <location>
        <begin position="10"/>
        <end position="20"/>
    </location>
</feature>
<feature type="compositionally biased region" description="Acidic residues" evidence="2">
    <location>
        <begin position="31"/>
        <end position="49"/>
    </location>
</feature>
<feature type="compositionally biased region" description="Basic residues" evidence="2">
    <location>
        <begin position="72"/>
        <end position="81"/>
    </location>
</feature>
<feature type="compositionally biased region" description="Acidic residues" evidence="2">
    <location>
        <begin position="88"/>
        <end position="107"/>
    </location>
</feature>
<feature type="compositionally biased region" description="Acidic residues" evidence="2">
    <location>
        <begin position="114"/>
        <end position="138"/>
    </location>
</feature>
<reference key="1">
    <citation type="journal article" date="2005" name="Nature">
        <title>Sequencing of Aspergillus nidulans and comparative analysis with A. fumigatus and A. oryzae.</title>
        <authorList>
            <person name="Galagan J.E."/>
            <person name="Calvo S.E."/>
            <person name="Cuomo C."/>
            <person name="Ma L.-J."/>
            <person name="Wortman J.R."/>
            <person name="Batzoglou S."/>
            <person name="Lee S.-I."/>
            <person name="Bastuerkmen M."/>
            <person name="Spevak C.C."/>
            <person name="Clutterbuck J."/>
            <person name="Kapitonov V."/>
            <person name="Jurka J."/>
            <person name="Scazzocchio C."/>
            <person name="Farman M.L."/>
            <person name="Butler J."/>
            <person name="Purcell S."/>
            <person name="Harris S."/>
            <person name="Braus G.H."/>
            <person name="Draht O."/>
            <person name="Busch S."/>
            <person name="D'Enfert C."/>
            <person name="Bouchier C."/>
            <person name="Goldman G.H."/>
            <person name="Bell-Pedersen D."/>
            <person name="Griffiths-Jones S."/>
            <person name="Doonan J.H."/>
            <person name="Yu J."/>
            <person name="Vienken K."/>
            <person name="Pain A."/>
            <person name="Freitag M."/>
            <person name="Selker E.U."/>
            <person name="Archer D.B."/>
            <person name="Penalva M.A."/>
            <person name="Oakley B.R."/>
            <person name="Momany M."/>
            <person name="Tanaka T."/>
            <person name="Kumagai T."/>
            <person name="Asai K."/>
            <person name="Machida M."/>
            <person name="Nierman W.C."/>
            <person name="Denning D.W."/>
            <person name="Caddick M.X."/>
            <person name="Hynes M."/>
            <person name="Paoletti M."/>
            <person name="Fischer R."/>
            <person name="Miller B.L."/>
            <person name="Dyer P.S."/>
            <person name="Sachs M.S."/>
            <person name="Osmani S.A."/>
            <person name="Birren B.W."/>
        </authorList>
    </citation>
    <scope>NUCLEOTIDE SEQUENCE [LARGE SCALE GENOMIC DNA]</scope>
    <source>
        <strain>FGSC A4 / ATCC 38163 / CBS 112.46 / NRRL 194 / M139</strain>
    </source>
</reference>
<reference key="2">
    <citation type="journal article" date="2009" name="Fungal Genet. Biol.">
        <title>The 2008 update of the Aspergillus nidulans genome annotation: a community effort.</title>
        <authorList>
            <person name="Wortman J.R."/>
            <person name="Gilsenan J.M."/>
            <person name="Joardar V."/>
            <person name="Deegan J."/>
            <person name="Clutterbuck J."/>
            <person name="Andersen M.R."/>
            <person name="Archer D."/>
            <person name="Bencina M."/>
            <person name="Braus G."/>
            <person name="Coutinho P."/>
            <person name="von Dohren H."/>
            <person name="Doonan J."/>
            <person name="Driessen A.J."/>
            <person name="Durek P."/>
            <person name="Espeso E."/>
            <person name="Fekete E."/>
            <person name="Flipphi M."/>
            <person name="Estrada C.G."/>
            <person name="Geysens S."/>
            <person name="Goldman G."/>
            <person name="de Groot P.W."/>
            <person name="Hansen K."/>
            <person name="Harris S.D."/>
            <person name="Heinekamp T."/>
            <person name="Helmstaedt K."/>
            <person name="Henrissat B."/>
            <person name="Hofmann G."/>
            <person name="Homan T."/>
            <person name="Horio T."/>
            <person name="Horiuchi H."/>
            <person name="James S."/>
            <person name="Jones M."/>
            <person name="Karaffa L."/>
            <person name="Karanyi Z."/>
            <person name="Kato M."/>
            <person name="Keller N."/>
            <person name="Kelly D.E."/>
            <person name="Kiel J.A."/>
            <person name="Kim J.M."/>
            <person name="van der Klei I.J."/>
            <person name="Klis F.M."/>
            <person name="Kovalchuk A."/>
            <person name="Krasevec N."/>
            <person name="Kubicek C.P."/>
            <person name="Liu B."/>
            <person name="Maccabe A."/>
            <person name="Meyer V."/>
            <person name="Mirabito P."/>
            <person name="Miskei M."/>
            <person name="Mos M."/>
            <person name="Mullins J."/>
            <person name="Nelson D.R."/>
            <person name="Nielsen J."/>
            <person name="Oakley B.R."/>
            <person name="Osmani S.A."/>
            <person name="Pakula T."/>
            <person name="Paszewski A."/>
            <person name="Paulsen I."/>
            <person name="Pilsyk S."/>
            <person name="Pocsi I."/>
            <person name="Punt P.J."/>
            <person name="Ram A.F."/>
            <person name="Ren Q."/>
            <person name="Robellet X."/>
            <person name="Robson G."/>
            <person name="Seiboth B."/>
            <person name="van Solingen P."/>
            <person name="Specht T."/>
            <person name="Sun J."/>
            <person name="Taheri-Talesh N."/>
            <person name="Takeshita N."/>
            <person name="Ussery D."/>
            <person name="vanKuyk P.A."/>
            <person name="Visser H."/>
            <person name="van de Vondervoort P.J."/>
            <person name="de Vries R.P."/>
            <person name="Walton J."/>
            <person name="Xiang X."/>
            <person name="Xiong Y."/>
            <person name="Zeng A.P."/>
            <person name="Brandt B.W."/>
            <person name="Cornell M.J."/>
            <person name="van den Hondel C.A."/>
            <person name="Visser J."/>
            <person name="Oliver S.G."/>
            <person name="Turner G."/>
        </authorList>
    </citation>
    <scope>GENOME REANNOTATION</scope>
    <source>
        <strain>FGSC A4 / ATCC 38163 / CBS 112.46 / NRRL 194 / M139</strain>
    </source>
</reference>
<protein>
    <recommendedName>
        <fullName>U3 small nucleolar RNA-associated protein 25</fullName>
        <shortName>U3 snoRNA-associated protein 25</shortName>
    </recommendedName>
    <alternativeName>
        <fullName>U three protein 25</fullName>
    </alternativeName>
</protein>
<organism>
    <name type="scientific">Emericella nidulans (strain FGSC A4 / ATCC 38163 / CBS 112.46 / NRRL 194 / M139)</name>
    <name type="common">Aspergillus nidulans</name>
    <dbReference type="NCBI Taxonomy" id="227321"/>
    <lineage>
        <taxon>Eukaryota</taxon>
        <taxon>Fungi</taxon>
        <taxon>Dikarya</taxon>
        <taxon>Ascomycota</taxon>
        <taxon>Pezizomycotina</taxon>
        <taxon>Eurotiomycetes</taxon>
        <taxon>Eurotiomycetidae</taxon>
        <taxon>Eurotiales</taxon>
        <taxon>Aspergillaceae</taxon>
        <taxon>Aspergillus</taxon>
        <taxon>Aspergillus subgen. Nidulantes</taxon>
    </lineage>
</organism>
<accession>Q5BDM6</accession>
<accession>C8VRX5</accession>
<name>UTP25_EMENI</name>
<comment type="function">
    <text evidence="1">DEAD-box RNA helicase-like protein required for pre-18S rRNA processing, specifically at sites A0, A1, and A2.</text>
</comment>
<comment type="subunit">
    <text evidence="1">Component of the ribosomal small subunit (SSU) processome composed of at least 40 protein subunits and snoRNA U3.</text>
</comment>
<comment type="subcellular location">
    <subcellularLocation>
        <location evidence="1">Nucleus</location>
        <location evidence="1">Nucleolus</location>
    </subcellularLocation>
</comment>
<comment type="similarity">
    <text evidence="3">Belongs to the UTP25 family.</text>
</comment>
<comment type="sequence caution" evidence="3">
    <conflict type="erroneous gene model prediction">
        <sequence resource="EMBL-CDS" id="EAA65537"/>
    </conflict>
</comment>
<evidence type="ECO:0000250" key="1"/>
<evidence type="ECO:0000256" key="2">
    <source>
        <dbReference type="SAM" id="MobiDB-lite"/>
    </source>
</evidence>
<evidence type="ECO:0000305" key="3"/>
<proteinExistence type="inferred from homology"/>